<feature type="chain" id="PRO_1000212647" description="Fumarate reductase subunit C">
    <location>
        <begin position="1"/>
        <end position="131"/>
    </location>
</feature>
<feature type="transmembrane region" description="Helical" evidence="1">
    <location>
        <begin position="30"/>
        <end position="50"/>
    </location>
</feature>
<feature type="transmembrane region" description="Helical" evidence="1">
    <location>
        <begin position="63"/>
        <end position="83"/>
    </location>
</feature>
<feature type="transmembrane region" description="Helical" evidence="1">
    <location>
        <begin position="109"/>
        <end position="129"/>
    </location>
</feature>
<name>FRDC_ECOBW</name>
<sequence>MTTKRKPYVRPMTSTWWKKLPFYRFYMLREGTAVPAVWFSIELIFGLFALKNGPEAWAGFVDFLQNPVIVIINLITLAAALLHTKTWFELAPKAANIIVKDEKMGPEPIIKSLWAVTVVATIVILFVALYW</sequence>
<comment type="function">
    <text evidence="1">Two distinct, membrane-bound, FAD-containing enzymes are responsible for the catalysis of fumarate and succinate interconversion; fumarate reductase is used in anaerobic growth, and succinate dehydrogenase is used in aerobic growth. Anchors the catalytic components of the fumarate reductase complex to the cell inner membrane, binds quinones.</text>
</comment>
<comment type="subunit">
    <text evidence="1">Part of an enzyme complex containing four subunits: a flavoprotein (FrdA), an iron-sulfur protein (FrdB), and two hydrophobic anchor proteins (FrdC and FrdD).</text>
</comment>
<comment type="subcellular location">
    <subcellularLocation>
        <location evidence="1">Cell inner membrane</location>
        <topology evidence="1">Multi-pass membrane protein</topology>
    </subcellularLocation>
</comment>
<comment type="similarity">
    <text evidence="1">Belongs to the FrdC family.</text>
</comment>
<dbReference type="EMBL" id="CP001396">
    <property type="protein sequence ID" value="ACR63156.1"/>
    <property type="molecule type" value="Genomic_DNA"/>
</dbReference>
<dbReference type="RefSeq" id="WP_000208757.1">
    <property type="nucleotide sequence ID" value="NC_012759.1"/>
</dbReference>
<dbReference type="SMR" id="C5A1E6"/>
<dbReference type="GeneID" id="93777670"/>
<dbReference type="KEGG" id="ebw:BWG_3867"/>
<dbReference type="HOGENOM" id="CLU_156492_0_0_6"/>
<dbReference type="GO" id="GO:0045283">
    <property type="term" value="C:fumarate reductase complex"/>
    <property type="evidence" value="ECO:0007669"/>
    <property type="project" value="UniProtKB-UniRule"/>
</dbReference>
<dbReference type="GO" id="GO:0005886">
    <property type="term" value="C:plasma membrane"/>
    <property type="evidence" value="ECO:0007669"/>
    <property type="project" value="UniProtKB-SubCell"/>
</dbReference>
<dbReference type="GO" id="GO:0000104">
    <property type="term" value="F:succinate dehydrogenase activity"/>
    <property type="evidence" value="ECO:0007669"/>
    <property type="project" value="UniProtKB-UniRule"/>
</dbReference>
<dbReference type="CDD" id="cd00546">
    <property type="entry name" value="QFR_TypeD_subunitC"/>
    <property type="match status" value="1"/>
</dbReference>
<dbReference type="FunFam" id="1.20.1300.10:FF:000003">
    <property type="entry name" value="Fumarate reductase subunit C"/>
    <property type="match status" value="1"/>
</dbReference>
<dbReference type="Gene3D" id="1.20.1300.10">
    <property type="entry name" value="Fumarate reductase/succinate dehydrogenase, transmembrane subunit"/>
    <property type="match status" value="1"/>
</dbReference>
<dbReference type="HAMAP" id="MF_00708">
    <property type="entry name" value="Fumarate_red_C"/>
    <property type="match status" value="1"/>
</dbReference>
<dbReference type="InterPro" id="IPR003510">
    <property type="entry name" value="Fumarate_red_C"/>
</dbReference>
<dbReference type="InterPro" id="IPR034804">
    <property type="entry name" value="SQR/QFR_C/D"/>
</dbReference>
<dbReference type="NCBIfam" id="NF003445">
    <property type="entry name" value="PRK04987.1"/>
    <property type="match status" value="1"/>
</dbReference>
<dbReference type="Pfam" id="PF02300">
    <property type="entry name" value="Fumarate_red_C"/>
    <property type="match status" value="1"/>
</dbReference>
<dbReference type="PIRSF" id="PIRSF000180">
    <property type="entry name" value="FrdC"/>
    <property type="match status" value="1"/>
</dbReference>
<dbReference type="SUPFAM" id="SSF81343">
    <property type="entry name" value="Fumarate reductase respiratory complex transmembrane subunits"/>
    <property type="match status" value="1"/>
</dbReference>
<accession>C5A1E6</accession>
<keyword id="KW-0997">Cell inner membrane</keyword>
<keyword id="KW-1003">Cell membrane</keyword>
<keyword id="KW-0472">Membrane</keyword>
<keyword id="KW-0812">Transmembrane</keyword>
<keyword id="KW-1133">Transmembrane helix</keyword>
<protein>
    <recommendedName>
        <fullName evidence="1">Fumarate reductase subunit C</fullName>
    </recommendedName>
    <alternativeName>
        <fullName evidence="1">Fumarate reductase 15 kDa hydrophobic protein</fullName>
    </alternativeName>
    <alternativeName>
        <fullName evidence="1">Quinol-fumarate reductase subunit C</fullName>
        <shortName evidence="1">QFR subunit C</shortName>
    </alternativeName>
</protein>
<reference key="1">
    <citation type="journal article" date="2009" name="J. Bacteriol.">
        <title>Genomic sequencing reveals regulatory mutations and recombinational events in the widely used MC4100 lineage of Escherichia coli K-12.</title>
        <authorList>
            <person name="Ferenci T."/>
            <person name="Zhou Z."/>
            <person name="Betteridge T."/>
            <person name="Ren Y."/>
            <person name="Liu Y."/>
            <person name="Feng L."/>
            <person name="Reeves P.R."/>
            <person name="Wang L."/>
        </authorList>
    </citation>
    <scope>NUCLEOTIDE SEQUENCE [LARGE SCALE GENOMIC DNA]</scope>
    <source>
        <strain>K12 / MC4100 / BW2952</strain>
    </source>
</reference>
<organism>
    <name type="scientific">Escherichia coli (strain K12 / MC4100 / BW2952)</name>
    <dbReference type="NCBI Taxonomy" id="595496"/>
    <lineage>
        <taxon>Bacteria</taxon>
        <taxon>Pseudomonadati</taxon>
        <taxon>Pseudomonadota</taxon>
        <taxon>Gammaproteobacteria</taxon>
        <taxon>Enterobacterales</taxon>
        <taxon>Enterobacteriaceae</taxon>
        <taxon>Escherichia</taxon>
    </lineage>
</organism>
<evidence type="ECO:0000255" key="1">
    <source>
        <dbReference type="HAMAP-Rule" id="MF_00708"/>
    </source>
</evidence>
<proteinExistence type="inferred from homology"/>
<gene>
    <name evidence="1" type="primary">frdC</name>
    <name type="ordered locus">BWG_3867</name>
</gene>